<accession>Q60295</accession>
<geneLocation type="plasmid">
    <name>large ECE</name>
</geneLocation>
<evidence type="ECO:0000250" key="1">
    <source>
        <dbReference type="UniProtKB" id="P08956"/>
    </source>
</evidence>
<evidence type="ECO:0000255" key="2">
    <source>
        <dbReference type="PROSITE-ProRule" id="PRU00541"/>
    </source>
</evidence>
<evidence type="ECO:0000255" key="3">
    <source>
        <dbReference type="PROSITE-ProRule" id="PRU00542"/>
    </source>
</evidence>
<evidence type="ECO:0000303" key="4">
    <source>
    </source>
</evidence>
<evidence type="ECO:0000305" key="5"/>
<keyword id="KW-0067">ATP-binding</keyword>
<keyword id="KW-0238">DNA-binding</keyword>
<keyword id="KW-0255">Endonuclease</keyword>
<keyword id="KW-0347">Helicase</keyword>
<keyword id="KW-0378">Hydrolase</keyword>
<keyword id="KW-0540">Nuclease</keyword>
<keyword id="KW-0547">Nucleotide-binding</keyword>
<keyword id="KW-0614">Plasmid</keyword>
<keyword id="KW-1185">Reference proteome</keyword>
<keyword id="KW-0680">Restriction system</keyword>
<name>T1RH_METJA</name>
<sequence length="1042" mass="121523">MPISANKYFLLVGVFIGDKMKKEAAKLNEDYVVENAAIQRLKNLGYSYKHGSELTPEYNERESYRDAILKNRFIKAIKNINPWLTEELALKVYKTVTNIDNPDFNMRGKIFYEMLINGVKLEFKENGEKKTRFVKLIDFENINKNEFLVANQFEVEYYYENGRFRRPDLVVFINGIPIAIFEFKSPKSNQTAKDAFNDHKTKMKDIPQLYQYAQILVVSDGLETKYGSPTSDWDRFFVWEGVESDDDVEVIEVDNYGNTMYKYKGNPYTSLDILLMGLFKKEHLIEFLEDFIIHDKKKIIATYYQFYTVKKAVDRTIKSVLYGETPEDRRIGIVWHAQGTGKSITMLFYAKKALKQKELNYPLLVFLTDRLELDEQLYNVFSSVFSEAERAESIAELQELIKKTPGGIIFATIQKFGRKSKDEHYPFLTDRNNIIIIADEAHRSHYGTLAQNLRKAIPNASFLAFTATPIDYKDRSTFLVFGDYISAYPIDKAKRHGVVVPIYYEARLVELHLTNEFIDLEFDEISERVANDPETKESIKEVFAKLEKIMLTEDYLSKVSKDIIEHFNKRLQDFDGKAMVVTISRKVAVELYKWITKQPNAPKIAVVMSGNKSKDPEDFHPHIRTKKELENLAKEFKDPESDLKMVIVVDMWLTGFDVPCLHTMYFLKPMKNHSLAQAIARVNRVFKDKPGGLIVDYIGIADDLSKSLSKYSSEARKDLMTDIKVVIEEMKRRYEKVTSYFKNINYKDWKKLSSEDLSLLTVKAYQRVAKDDNTKKEFVRNVIALKKLYLLARPHPETIGIKDDLEFFEMIKKMIVKYSTKKIREISQDLENDIQSLISKSISAKELVDVFEMLKKEKPELSVLSDEFLSEIAKIEYKDYVRDVLIKILNDDIRVRMAKNPIRFKKFSERLNEVIEKYRIKVITTAEMIEELVNLAKEIRKAAEEGKELGLTEEELAFYDLLLSYPNIPLTDKKRVEKIAKEIARMMSGYIKARDWKKKKNLQSKIRAKLKIILMKEGIKDYSLINKISDDLFEYAKNIYAI</sequence>
<organism>
    <name type="scientific">Methanocaldococcus jannaschii (strain ATCC 43067 / DSM 2661 / JAL-1 / JCM 10045 / NBRC 100440)</name>
    <name type="common">Methanococcus jannaschii</name>
    <dbReference type="NCBI Taxonomy" id="243232"/>
    <lineage>
        <taxon>Archaea</taxon>
        <taxon>Methanobacteriati</taxon>
        <taxon>Methanobacteriota</taxon>
        <taxon>Methanomada group</taxon>
        <taxon>Methanococci</taxon>
        <taxon>Methanococcales</taxon>
        <taxon>Methanocaldococcaceae</taxon>
        <taxon>Methanocaldococcus</taxon>
    </lineage>
</organism>
<reference key="1">
    <citation type="journal article" date="1996" name="Science">
        <title>Complete genome sequence of the methanogenic archaeon, Methanococcus jannaschii.</title>
        <authorList>
            <person name="Bult C.J."/>
            <person name="White O."/>
            <person name="Olsen G.J."/>
            <person name="Zhou L."/>
            <person name="Fleischmann R.D."/>
            <person name="Sutton G.G."/>
            <person name="Blake J.A."/>
            <person name="FitzGerald L.M."/>
            <person name="Clayton R.A."/>
            <person name="Gocayne J.D."/>
            <person name="Kerlavage A.R."/>
            <person name="Dougherty B.A."/>
            <person name="Tomb J.-F."/>
            <person name="Adams M.D."/>
            <person name="Reich C.I."/>
            <person name="Overbeek R."/>
            <person name="Kirkness E.F."/>
            <person name="Weinstock K.G."/>
            <person name="Merrick J.M."/>
            <person name="Glodek A."/>
            <person name="Scott J.L."/>
            <person name="Geoghagen N.S.M."/>
            <person name="Weidman J.F."/>
            <person name="Fuhrmann J.L."/>
            <person name="Nguyen D."/>
            <person name="Utterback T.R."/>
            <person name="Kelley J.M."/>
            <person name="Peterson J.D."/>
            <person name="Sadow P.W."/>
            <person name="Hanna M.C."/>
            <person name="Cotton M.D."/>
            <person name="Roberts K.M."/>
            <person name="Hurst M.A."/>
            <person name="Kaine B.P."/>
            <person name="Borodovsky M."/>
            <person name="Klenk H.-P."/>
            <person name="Fraser C.M."/>
            <person name="Smith H.O."/>
            <person name="Woese C.R."/>
            <person name="Venter J.C."/>
        </authorList>
    </citation>
    <scope>NUCLEOTIDE SEQUENCE [LARGE SCALE GENOMIC DNA]</scope>
    <source>
        <strain>ATCC 43067 / DSM 2661 / JAL-1 / JCM 10045 / NBRC 100440</strain>
    </source>
</reference>
<reference key="2">
    <citation type="journal article" date="2003" name="Nucleic Acids Res.">
        <title>A nomenclature for restriction enzymes, DNA methyltransferases, homing endonucleases and their genes.</title>
        <authorList>
            <person name="Roberts R.J."/>
            <person name="Belfort M."/>
            <person name="Bestor T."/>
            <person name="Bhagwat A.S."/>
            <person name="Bickle T.A."/>
            <person name="Bitinaite J."/>
            <person name="Blumenthal R.M."/>
            <person name="Degtyarev S.K."/>
            <person name="Dryden D.T."/>
            <person name="Dybvig K."/>
            <person name="Firman K."/>
            <person name="Gromova E.S."/>
            <person name="Gumport R.I."/>
            <person name="Halford S.E."/>
            <person name="Hattman S."/>
            <person name="Heitman J."/>
            <person name="Hornby D.P."/>
            <person name="Janulaitis A."/>
            <person name="Jeltsch A."/>
            <person name="Josephsen J."/>
            <person name="Kiss A."/>
            <person name="Klaenhammer T.R."/>
            <person name="Kobayashi I."/>
            <person name="Kong H."/>
            <person name="Krueger D.H."/>
            <person name="Lacks S."/>
            <person name="Marinus M.G."/>
            <person name="Miyahara M."/>
            <person name="Morgan R.D."/>
            <person name="Murray N.E."/>
            <person name="Nagaraja V."/>
            <person name="Piekarowicz A."/>
            <person name="Pingoud A."/>
            <person name="Raleigh E."/>
            <person name="Rao D.N."/>
            <person name="Reich N."/>
            <person name="Repin V.E."/>
            <person name="Selker E.U."/>
            <person name="Shaw P.C."/>
            <person name="Stein D.C."/>
            <person name="Stoddard B.L."/>
            <person name="Szybalski W."/>
            <person name="Trautner T.A."/>
            <person name="Van Etten J.L."/>
            <person name="Vitor J.M."/>
            <person name="Wilson G.G."/>
            <person name="Xu S.Y."/>
        </authorList>
    </citation>
    <scope>NOMENCLATURE</scope>
</reference>
<protein>
    <recommendedName>
        <fullName evidence="4">Putative type I restriction enzyme MjaIXP endonuclease subunit</fullName>
        <shortName evidence="4">MjaIXP</shortName>
        <shortName evidence="5">R protein</shortName>
        <ecNumber evidence="1">3.1.21.3</ecNumber>
    </recommendedName>
    <alternativeName>
        <fullName>Putative type-1 restriction enzyme MjaXP R protein</fullName>
    </alternativeName>
</protein>
<gene>
    <name type="ordered locus">MJECL40</name>
</gene>
<proteinExistence type="inferred from homology"/>
<dbReference type="EC" id="3.1.21.3" evidence="1"/>
<dbReference type="EMBL" id="L77118">
    <property type="protein sequence ID" value="AAC37109.1"/>
    <property type="molecule type" value="Genomic_DNA"/>
</dbReference>
<dbReference type="PIR" id="G64514">
    <property type="entry name" value="G64514"/>
</dbReference>
<dbReference type="SMR" id="Q60295"/>
<dbReference type="FunCoup" id="Q60295">
    <property type="interactions" value="1"/>
</dbReference>
<dbReference type="REBASE" id="191891">
    <property type="entry name" value="Apa1468ORF2715P"/>
</dbReference>
<dbReference type="REBASE" id="3908">
    <property type="entry name" value="MjaIXP"/>
</dbReference>
<dbReference type="PaxDb" id="243232-MJ_ECL40"/>
<dbReference type="EnsemblBacteria" id="AAC37109">
    <property type="protein sequence ID" value="AAC37109"/>
    <property type="gene ID" value="MJ_ECL40"/>
</dbReference>
<dbReference type="KEGG" id="mja:MJ_ECL40"/>
<dbReference type="eggNOG" id="arCOG00878">
    <property type="taxonomic scope" value="Archaea"/>
</dbReference>
<dbReference type="HOGENOM" id="CLU_005762_1_0_2"/>
<dbReference type="InParanoid" id="Q60295"/>
<dbReference type="OrthoDB" id="11429at2157"/>
<dbReference type="PhylomeDB" id="Q60295"/>
<dbReference type="PRO" id="PR:Q60295"/>
<dbReference type="Proteomes" id="UP000000805">
    <property type="component" value="Plasmid pDSM2661_1"/>
</dbReference>
<dbReference type="GO" id="GO:0005524">
    <property type="term" value="F:ATP binding"/>
    <property type="evidence" value="ECO:0007669"/>
    <property type="project" value="UniProtKB-KW"/>
</dbReference>
<dbReference type="GO" id="GO:0003677">
    <property type="term" value="F:DNA binding"/>
    <property type="evidence" value="ECO:0007669"/>
    <property type="project" value="UniProtKB-KW"/>
</dbReference>
<dbReference type="GO" id="GO:0004386">
    <property type="term" value="F:helicase activity"/>
    <property type="evidence" value="ECO:0007669"/>
    <property type="project" value="UniProtKB-KW"/>
</dbReference>
<dbReference type="GO" id="GO:0016491">
    <property type="term" value="F:oxidoreductase activity"/>
    <property type="evidence" value="ECO:0007669"/>
    <property type="project" value="InterPro"/>
</dbReference>
<dbReference type="GO" id="GO:0009035">
    <property type="term" value="F:type I site-specific deoxyribonuclease activity"/>
    <property type="evidence" value="ECO:0007669"/>
    <property type="project" value="UniProtKB-EC"/>
</dbReference>
<dbReference type="GO" id="GO:0009307">
    <property type="term" value="P:DNA restriction-modification system"/>
    <property type="evidence" value="ECO:0007669"/>
    <property type="project" value="UniProtKB-KW"/>
</dbReference>
<dbReference type="CDD" id="cd18030">
    <property type="entry name" value="DEXHc_RE_I_HsdR"/>
    <property type="match status" value="1"/>
</dbReference>
<dbReference type="CDD" id="cd22332">
    <property type="entry name" value="HsdR_N"/>
    <property type="match status" value="1"/>
</dbReference>
<dbReference type="CDD" id="cd18800">
    <property type="entry name" value="SF2_C_EcoR124I-like"/>
    <property type="match status" value="1"/>
</dbReference>
<dbReference type="Gene3D" id="3.90.1570.50">
    <property type="match status" value="1"/>
</dbReference>
<dbReference type="Gene3D" id="3.40.50.300">
    <property type="entry name" value="P-loop containing nucleotide triphosphate hydrolases"/>
    <property type="match status" value="3"/>
</dbReference>
<dbReference type="InterPro" id="IPR014001">
    <property type="entry name" value="Helicase_ATP-bd"/>
</dbReference>
<dbReference type="InterPro" id="IPR055180">
    <property type="entry name" value="HsdR_RecA-like_helicase_dom_2"/>
</dbReference>
<dbReference type="InterPro" id="IPR027417">
    <property type="entry name" value="P-loop_NTPase"/>
</dbReference>
<dbReference type="InterPro" id="IPR011254">
    <property type="entry name" value="Prismane-like_sf"/>
</dbReference>
<dbReference type="InterPro" id="IPR007409">
    <property type="entry name" value="Restrct_endonuc_type1_HsdR_N"/>
</dbReference>
<dbReference type="InterPro" id="IPR004473">
    <property type="entry name" value="Restrct_endonuc_typeI_HsdR"/>
</dbReference>
<dbReference type="InterPro" id="IPR040980">
    <property type="entry name" value="SWI2_SNF2"/>
</dbReference>
<dbReference type="InterPro" id="IPR021810">
    <property type="entry name" value="T1RH-like_C"/>
</dbReference>
<dbReference type="InterPro" id="IPR051268">
    <property type="entry name" value="Type-I_R_enzyme_R_subunit"/>
</dbReference>
<dbReference type="NCBIfam" id="TIGR00348">
    <property type="entry name" value="hsdR"/>
    <property type="match status" value="1"/>
</dbReference>
<dbReference type="PANTHER" id="PTHR30195:SF15">
    <property type="entry name" value="TYPE I RESTRICTION ENZYME HINDI ENDONUCLEASE SUBUNIT"/>
    <property type="match status" value="1"/>
</dbReference>
<dbReference type="PANTHER" id="PTHR30195">
    <property type="entry name" value="TYPE I SITE-SPECIFIC DEOXYRIBONUCLEASE PROTEIN SUBUNIT M AND R"/>
    <property type="match status" value="1"/>
</dbReference>
<dbReference type="Pfam" id="PF04313">
    <property type="entry name" value="HSDR_N"/>
    <property type="match status" value="1"/>
</dbReference>
<dbReference type="Pfam" id="PF18766">
    <property type="entry name" value="SWI2_SNF2"/>
    <property type="match status" value="1"/>
</dbReference>
<dbReference type="Pfam" id="PF22679">
    <property type="entry name" value="T1R_D3-like"/>
    <property type="match status" value="1"/>
</dbReference>
<dbReference type="Pfam" id="PF11867">
    <property type="entry name" value="T1RH-like_C"/>
    <property type="match status" value="1"/>
</dbReference>
<dbReference type="SMART" id="SM00487">
    <property type="entry name" value="DEXDc"/>
    <property type="match status" value="1"/>
</dbReference>
<dbReference type="SUPFAM" id="SSF52540">
    <property type="entry name" value="P-loop containing nucleoside triphosphate hydrolases"/>
    <property type="match status" value="2"/>
</dbReference>
<dbReference type="SUPFAM" id="SSF56821">
    <property type="entry name" value="Prismane protein-like"/>
    <property type="match status" value="1"/>
</dbReference>
<dbReference type="PROSITE" id="PS51192">
    <property type="entry name" value="HELICASE_ATP_BIND_1"/>
    <property type="match status" value="1"/>
</dbReference>
<dbReference type="PROSITE" id="PS51194">
    <property type="entry name" value="HELICASE_CTER"/>
    <property type="match status" value="1"/>
</dbReference>
<feature type="chain" id="PRO_0000077273" description="Putative type I restriction enzyme MjaIXP endonuclease subunit">
    <location>
        <begin position="1"/>
        <end position="1042"/>
    </location>
</feature>
<feature type="domain" description="Helicase ATP-binding" evidence="2">
    <location>
        <begin position="323"/>
        <end position="487"/>
    </location>
</feature>
<feature type="domain" description="Helicase C-terminal" evidence="3">
    <location>
        <begin position="551"/>
        <end position="731"/>
    </location>
</feature>
<feature type="short sequence motif" description="DEAH box" evidence="2">
    <location>
        <begin position="439"/>
        <end position="442"/>
    </location>
</feature>
<comment type="function">
    <text evidence="1 4">The restriction (R) subunit of a type I restriction enzyme that recognizes 5'-CCAN(5)GTR-3' and cleaves a random distance away. The R subunit is required for both nuclease and ATPase activities, but not for modification. After locating a non-methylated recognition site, the enzyme complex serves as a molecular motor that translocates DNA in an ATP-dependent manner until a collision occurs that triggers cleavage.</text>
</comment>
<comment type="catalytic activity">
    <reaction evidence="1">
        <text>Endonucleolytic cleavage of DNA to give random double-stranded fragments with terminal 5'-phosphates, ATP is simultaneously hydrolyzed.</text>
        <dbReference type="EC" id="3.1.21.3"/>
    </reaction>
</comment>
<comment type="subunit">
    <text evidence="1">The type I restriction/modification system is composed of three polypeptides R, M and S.</text>
</comment>
<comment type="miscellaneous">
    <text evidence="1">Type I restriction and modification enzymes are complex, multifunctional systems which require ATP, S-adenosyl methionine and magnesium as cofactors and, in addition to their endonucleolytic and methylase activities, are potent DNA-dependent ATPases.</text>
</comment>
<comment type="similarity">
    <text evidence="5">Belongs to the HsdR family.</text>
</comment>